<reference key="1">
    <citation type="journal article" date="2007" name="Proc. Natl. Acad. Sci. U.S.A.">
        <title>Deep-sea vent epsilon-proteobacterial genomes provide insights into emergence of pathogens.</title>
        <authorList>
            <person name="Nakagawa S."/>
            <person name="Takaki Y."/>
            <person name="Shimamura S."/>
            <person name="Reysenbach A.-L."/>
            <person name="Takai K."/>
            <person name="Horikoshi K."/>
        </authorList>
    </citation>
    <scope>NUCLEOTIDE SEQUENCE [LARGE SCALE GENOMIC DNA]</scope>
    <source>
        <strain>NBC37-1</strain>
    </source>
</reference>
<name>RL10_SULNB</name>
<accession>A6Q6I0</accession>
<sequence>MTRTRKEELVAEMTAEFKDAGAIIVCDYKGMTVENLETVRNLAKDEDTKVKVVKNRLAMIALQNAGCEAVDFKDTNLVIWGDTQVLPCKIADKAATQFKDHFTIKTGLIQGEVASMETINAMAKLPTRDELIGMLLNVWNAPVQNFTIGLQALADKKESEA</sequence>
<organism>
    <name type="scientific">Sulfurovum sp. (strain NBC37-1)</name>
    <dbReference type="NCBI Taxonomy" id="387093"/>
    <lineage>
        <taxon>Bacteria</taxon>
        <taxon>Pseudomonadati</taxon>
        <taxon>Campylobacterota</taxon>
        <taxon>Epsilonproteobacteria</taxon>
        <taxon>Campylobacterales</taxon>
        <taxon>Sulfurovaceae</taxon>
        <taxon>Sulfurovum</taxon>
    </lineage>
</organism>
<protein>
    <recommendedName>
        <fullName evidence="1">Large ribosomal subunit protein uL10</fullName>
    </recommendedName>
    <alternativeName>
        <fullName evidence="2">50S ribosomal protein L10</fullName>
    </alternativeName>
</protein>
<proteinExistence type="inferred from homology"/>
<gene>
    <name evidence="1" type="primary">rplJ</name>
    <name type="ordered locus">SUN_0129</name>
</gene>
<keyword id="KW-0687">Ribonucleoprotein</keyword>
<keyword id="KW-0689">Ribosomal protein</keyword>
<keyword id="KW-0694">RNA-binding</keyword>
<keyword id="KW-0699">rRNA-binding</keyword>
<feature type="chain" id="PRO_1000005608" description="Large ribosomal subunit protein uL10">
    <location>
        <begin position="1"/>
        <end position="161"/>
    </location>
</feature>
<dbReference type="EMBL" id="AP009179">
    <property type="protein sequence ID" value="BAF71089.1"/>
    <property type="molecule type" value="Genomic_DNA"/>
</dbReference>
<dbReference type="RefSeq" id="WP_011979822.1">
    <property type="nucleotide sequence ID" value="NC_009663.1"/>
</dbReference>
<dbReference type="SMR" id="A6Q6I0"/>
<dbReference type="STRING" id="387093.SUN_0129"/>
<dbReference type="KEGG" id="sun:SUN_0129"/>
<dbReference type="eggNOG" id="COG0244">
    <property type="taxonomic scope" value="Bacteria"/>
</dbReference>
<dbReference type="HOGENOM" id="CLU_092227_2_2_7"/>
<dbReference type="OrthoDB" id="3186107at2"/>
<dbReference type="Proteomes" id="UP000006378">
    <property type="component" value="Chromosome"/>
</dbReference>
<dbReference type="GO" id="GO:1990904">
    <property type="term" value="C:ribonucleoprotein complex"/>
    <property type="evidence" value="ECO:0007669"/>
    <property type="project" value="UniProtKB-KW"/>
</dbReference>
<dbReference type="GO" id="GO:0005840">
    <property type="term" value="C:ribosome"/>
    <property type="evidence" value="ECO:0007669"/>
    <property type="project" value="UniProtKB-KW"/>
</dbReference>
<dbReference type="GO" id="GO:0070180">
    <property type="term" value="F:large ribosomal subunit rRNA binding"/>
    <property type="evidence" value="ECO:0007669"/>
    <property type="project" value="UniProtKB-UniRule"/>
</dbReference>
<dbReference type="GO" id="GO:0006412">
    <property type="term" value="P:translation"/>
    <property type="evidence" value="ECO:0007669"/>
    <property type="project" value="UniProtKB-UniRule"/>
</dbReference>
<dbReference type="CDD" id="cd05797">
    <property type="entry name" value="Ribosomal_L10"/>
    <property type="match status" value="1"/>
</dbReference>
<dbReference type="Gene3D" id="3.30.70.1730">
    <property type="match status" value="1"/>
</dbReference>
<dbReference type="Gene3D" id="6.10.250.290">
    <property type="match status" value="1"/>
</dbReference>
<dbReference type="HAMAP" id="MF_00362">
    <property type="entry name" value="Ribosomal_uL10"/>
    <property type="match status" value="1"/>
</dbReference>
<dbReference type="InterPro" id="IPR001790">
    <property type="entry name" value="Ribosomal_uL10"/>
</dbReference>
<dbReference type="InterPro" id="IPR043141">
    <property type="entry name" value="Ribosomal_uL10-like_sf"/>
</dbReference>
<dbReference type="InterPro" id="IPR022973">
    <property type="entry name" value="Ribosomal_uL10_bac"/>
</dbReference>
<dbReference type="InterPro" id="IPR047865">
    <property type="entry name" value="Ribosomal_uL10_bac_type"/>
</dbReference>
<dbReference type="NCBIfam" id="NF000955">
    <property type="entry name" value="PRK00099.1-1"/>
    <property type="match status" value="1"/>
</dbReference>
<dbReference type="PANTHER" id="PTHR11560">
    <property type="entry name" value="39S RIBOSOMAL PROTEIN L10, MITOCHONDRIAL"/>
    <property type="match status" value="1"/>
</dbReference>
<dbReference type="Pfam" id="PF00466">
    <property type="entry name" value="Ribosomal_L10"/>
    <property type="match status" value="1"/>
</dbReference>
<dbReference type="SUPFAM" id="SSF160369">
    <property type="entry name" value="Ribosomal protein L10-like"/>
    <property type="match status" value="1"/>
</dbReference>
<evidence type="ECO:0000255" key="1">
    <source>
        <dbReference type="HAMAP-Rule" id="MF_00362"/>
    </source>
</evidence>
<evidence type="ECO:0000305" key="2"/>
<comment type="function">
    <text evidence="1">Forms part of the ribosomal stalk, playing a central role in the interaction of the ribosome with GTP-bound translation factors.</text>
</comment>
<comment type="subunit">
    <text evidence="1">Part of the ribosomal stalk of the 50S ribosomal subunit. The N-terminus interacts with L11 and the large rRNA to form the base of the stalk. The C-terminus forms an elongated spine to which L12 dimers bind in a sequential fashion forming a multimeric L10(L12)X complex.</text>
</comment>
<comment type="similarity">
    <text evidence="1">Belongs to the universal ribosomal protein uL10 family.</text>
</comment>